<organism>
    <name type="scientific">Xenopus laevis</name>
    <name type="common">African clawed frog</name>
    <dbReference type="NCBI Taxonomy" id="8355"/>
    <lineage>
        <taxon>Eukaryota</taxon>
        <taxon>Metazoa</taxon>
        <taxon>Chordata</taxon>
        <taxon>Craniata</taxon>
        <taxon>Vertebrata</taxon>
        <taxon>Euteleostomi</taxon>
        <taxon>Amphibia</taxon>
        <taxon>Batrachia</taxon>
        <taxon>Anura</taxon>
        <taxon>Pipoidea</taxon>
        <taxon>Pipidae</taxon>
        <taxon>Xenopodinae</taxon>
        <taxon>Xenopus</taxon>
        <taxon>Xenopus</taxon>
    </lineage>
</organism>
<feature type="chain" id="PRO_0000289068" description="WD repeat-containing protein 1-B">
    <location>
        <begin position="1"/>
        <end position="607"/>
    </location>
</feature>
<feature type="repeat" description="WD 1" evidence="3">
    <location>
        <begin position="4"/>
        <end position="45"/>
    </location>
</feature>
<feature type="repeat" description="WD 2" evidence="3">
    <location>
        <begin position="48"/>
        <end position="87"/>
    </location>
</feature>
<feature type="repeat" description="WD 3" evidence="3">
    <location>
        <begin position="93"/>
        <end position="135"/>
    </location>
</feature>
<feature type="repeat" description="WD 4" evidence="3">
    <location>
        <begin position="138"/>
        <end position="176"/>
    </location>
</feature>
<feature type="repeat" description="WD 5" evidence="3">
    <location>
        <begin position="180"/>
        <end position="218"/>
    </location>
</feature>
<feature type="repeat" description="WD 6" evidence="3">
    <location>
        <begin position="224"/>
        <end position="263"/>
    </location>
</feature>
<feature type="repeat" description="WD 7" evidence="3">
    <location>
        <begin position="270"/>
        <end position="306"/>
    </location>
</feature>
<feature type="repeat" description="WD 8" evidence="3">
    <location>
        <begin position="311"/>
        <end position="351"/>
    </location>
</feature>
<feature type="repeat" description="WD 9" evidence="3">
    <location>
        <begin position="358"/>
        <end position="408"/>
    </location>
</feature>
<feature type="repeat" description="WD 10" evidence="3">
    <location>
        <begin position="432"/>
        <end position="474"/>
    </location>
</feature>
<feature type="repeat" description="WD 11" evidence="3">
    <location>
        <begin position="480"/>
        <end position="518"/>
    </location>
</feature>
<feature type="repeat" description="WD 12" evidence="3">
    <location>
        <begin position="523"/>
        <end position="561"/>
    </location>
</feature>
<feature type="repeat" description="WD 13" evidence="3">
    <location>
        <begin position="566"/>
        <end position="604"/>
    </location>
</feature>
<accession>Q6PAX7</accession>
<protein>
    <recommendedName>
        <fullName>WD repeat-containing protein 1-B</fullName>
    </recommendedName>
    <alternativeName>
        <fullName>Actin-interacting protein 1-B</fullName>
        <shortName>xAIP1-B</shortName>
    </alternativeName>
</protein>
<gene>
    <name type="primary">wdr1-b</name>
    <name type="synonym">aip1-b</name>
</gene>
<evidence type="ECO:0000250" key="1"/>
<evidence type="ECO:0000250" key="2">
    <source>
        <dbReference type="UniProtKB" id="Q9W7F2"/>
    </source>
</evidence>
<evidence type="ECO:0000255" key="3"/>
<evidence type="ECO:0000312" key="4">
    <source>
        <dbReference type="EMBL" id="AAH60007.1"/>
    </source>
</evidence>
<dbReference type="EMBL" id="BC060007">
    <property type="protein sequence ID" value="AAH60007.1"/>
    <property type="molecule type" value="mRNA"/>
</dbReference>
<dbReference type="RefSeq" id="NP_001083198.1">
    <property type="nucleotide sequence ID" value="NM_001089729.1"/>
</dbReference>
<dbReference type="SMR" id="Q6PAX7"/>
<dbReference type="DNASU" id="398797"/>
<dbReference type="GeneID" id="398797"/>
<dbReference type="KEGG" id="xla:398797"/>
<dbReference type="AGR" id="Xenbase:XB-GENE-865912"/>
<dbReference type="CTD" id="398797"/>
<dbReference type="Xenbase" id="XB-GENE-865912">
    <property type="gene designation" value="wdr1.S"/>
</dbReference>
<dbReference type="OrthoDB" id="2306at2759"/>
<dbReference type="Proteomes" id="UP000186698">
    <property type="component" value="Chromosome 1S"/>
</dbReference>
<dbReference type="Bgee" id="398797">
    <property type="expression patterns" value="Expressed in brain and 19 other cell types or tissues"/>
</dbReference>
<dbReference type="GO" id="GO:0005884">
    <property type="term" value="C:actin filament"/>
    <property type="evidence" value="ECO:0000250"/>
    <property type="project" value="UniProtKB"/>
</dbReference>
<dbReference type="GO" id="GO:0030864">
    <property type="term" value="C:cortical actin cytoskeleton"/>
    <property type="evidence" value="ECO:0000318"/>
    <property type="project" value="GO_Central"/>
</dbReference>
<dbReference type="GO" id="GO:0005737">
    <property type="term" value="C:cytoplasm"/>
    <property type="evidence" value="ECO:0000250"/>
    <property type="project" value="UniProtKB"/>
</dbReference>
<dbReference type="GO" id="GO:0005634">
    <property type="term" value="C:nucleus"/>
    <property type="evidence" value="ECO:0000250"/>
    <property type="project" value="UniProtKB"/>
</dbReference>
<dbReference type="GO" id="GO:0005886">
    <property type="term" value="C:plasma membrane"/>
    <property type="evidence" value="ECO:0000250"/>
    <property type="project" value="UniProtKB"/>
</dbReference>
<dbReference type="GO" id="GO:0003779">
    <property type="term" value="F:actin binding"/>
    <property type="evidence" value="ECO:0000250"/>
    <property type="project" value="UniProtKB"/>
</dbReference>
<dbReference type="GO" id="GO:0051015">
    <property type="term" value="F:actin filament binding"/>
    <property type="evidence" value="ECO:0000250"/>
    <property type="project" value="UniProtKB"/>
</dbReference>
<dbReference type="GO" id="GO:0030042">
    <property type="term" value="P:actin filament depolymerization"/>
    <property type="evidence" value="ECO:0000318"/>
    <property type="project" value="GO_Central"/>
</dbReference>
<dbReference type="GO" id="GO:0030043">
    <property type="term" value="P:actin filament fragmentation"/>
    <property type="evidence" value="ECO:0000250"/>
    <property type="project" value="UniProtKB"/>
</dbReference>
<dbReference type="GO" id="GO:0040011">
    <property type="term" value="P:locomotion"/>
    <property type="evidence" value="ECO:0000318"/>
    <property type="project" value="GO_Central"/>
</dbReference>
<dbReference type="GO" id="GO:0045214">
    <property type="term" value="P:sarcomere organization"/>
    <property type="evidence" value="ECO:0000318"/>
    <property type="project" value="GO_Central"/>
</dbReference>
<dbReference type="CDD" id="cd00200">
    <property type="entry name" value="WD40"/>
    <property type="match status" value="1"/>
</dbReference>
<dbReference type="FunFam" id="2.130.10.10:FF:000097">
    <property type="entry name" value="WD repeat domain 1"/>
    <property type="match status" value="1"/>
</dbReference>
<dbReference type="FunFam" id="2.130.10.10:FF:000203">
    <property type="entry name" value="WD repeat domain 1"/>
    <property type="match status" value="1"/>
</dbReference>
<dbReference type="Gene3D" id="2.130.10.10">
    <property type="entry name" value="YVTN repeat-like/Quinoprotein amine dehydrogenase"/>
    <property type="match status" value="2"/>
</dbReference>
<dbReference type="InterPro" id="IPR020472">
    <property type="entry name" value="G-protein_beta_WD-40_rep"/>
</dbReference>
<dbReference type="InterPro" id="IPR011045">
    <property type="entry name" value="N2O_reductase_N"/>
</dbReference>
<dbReference type="InterPro" id="IPR015943">
    <property type="entry name" value="WD40/YVTN_repeat-like_dom_sf"/>
</dbReference>
<dbReference type="InterPro" id="IPR019775">
    <property type="entry name" value="WD40_repeat_CS"/>
</dbReference>
<dbReference type="InterPro" id="IPR036322">
    <property type="entry name" value="WD40_repeat_dom_sf"/>
</dbReference>
<dbReference type="InterPro" id="IPR001680">
    <property type="entry name" value="WD40_rpt"/>
</dbReference>
<dbReference type="PANTHER" id="PTHR19856:SF0">
    <property type="entry name" value="WD REPEAT-CONTAINING PROTEIN 1"/>
    <property type="match status" value="1"/>
</dbReference>
<dbReference type="PANTHER" id="PTHR19856">
    <property type="entry name" value="WD-REPEATCONTAINING PROTEIN WDR1"/>
    <property type="match status" value="1"/>
</dbReference>
<dbReference type="Pfam" id="PF00400">
    <property type="entry name" value="WD40"/>
    <property type="match status" value="7"/>
</dbReference>
<dbReference type="PRINTS" id="PR00320">
    <property type="entry name" value="GPROTEINBRPT"/>
</dbReference>
<dbReference type="SMART" id="SM00320">
    <property type="entry name" value="WD40"/>
    <property type="match status" value="11"/>
</dbReference>
<dbReference type="SUPFAM" id="SSF50974">
    <property type="entry name" value="Nitrous oxide reductase, N-terminal domain"/>
    <property type="match status" value="1"/>
</dbReference>
<dbReference type="SUPFAM" id="SSF50978">
    <property type="entry name" value="WD40 repeat-like"/>
    <property type="match status" value="1"/>
</dbReference>
<dbReference type="PROSITE" id="PS00678">
    <property type="entry name" value="WD_REPEATS_1"/>
    <property type="match status" value="1"/>
</dbReference>
<dbReference type="PROSITE" id="PS50082">
    <property type="entry name" value="WD_REPEATS_2"/>
    <property type="match status" value="5"/>
</dbReference>
<dbReference type="PROSITE" id="PS50294">
    <property type="entry name" value="WD_REPEATS_REGION"/>
    <property type="match status" value="1"/>
</dbReference>
<comment type="function">
    <text evidence="2">Induces disassembly of actin filaments in conjunction with ADF/cofilin family proteins. Doesn't sever actin filaments alone, but caps the barbed ends of filaments severed by cofilin, which blocks annealing and depolymerization and allows more extensive severing by cofilin (By similarity).</text>
</comment>
<comment type="subcellular location">
    <subcellularLocation>
        <location evidence="2">Cell membrane</location>
    </subcellularLocation>
    <subcellularLocation>
        <location evidence="1">Cytoplasm</location>
        <location evidence="1">Cytoskeleton</location>
    </subcellularLocation>
    <subcellularLocation>
        <location evidence="2">Nucleus</location>
    </subcellularLocation>
</comment>
<comment type="similarity">
    <text evidence="3">Belongs to the WD repeat AIP1 family.</text>
</comment>
<reference evidence="4" key="1">
    <citation type="submission" date="2003-10" db="EMBL/GenBank/DDBJ databases">
        <authorList>
            <consortium name="NIH - Xenopus Gene Collection (XGC) project"/>
        </authorList>
    </citation>
    <scope>NUCLEOTIDE SEQUENCE [LARGE SCALE MRNA]</scope>
    <source>
        <tissue evidence="4">Kidney</tissue>
    </source>
</reference>
<sequence length="607" mass="66169">MPYEIKKVFASLPQVERGVAKIIAGDPKGNNFLYTNGKSVIIRNIDNPAIADIYTEHAHQVVVARYAPSGFYIASGDTSGKLRIWDTTQKEHLLKYEYQPFAGKIKDIAWTEDSKRIAVVGEGREKFGSVFLWDTGSSVGEIIGNIKVINSVDIKQTRPYRLVTGSDDNCCAFFEGPPFKFKFTMSDHSRFVNCVRFSPDGSRLASAGADGQIFLYDGKTGEKVCSLGGSKAHDGGIYAVSWSPDGTQLLSASGDKTAKIWDVAANSAVTTFNLGSDVLDQQLGCLWQKDYLLSVSLSGYINYLDKNNPAKPFRIIKGHNKSIQCMTVDKSDGRSTIYTGSHDGHINYWDAETGENNTFTGKGHTNQVSSMDLDGSSQLITCSMDDTLRYTNLISKDYSSSESVKMDVQPKCVAVGSGGYVVTVCIGQIVLLKDKKKVFAIDSLDYEPEAVAIHKGSGTVSVGGADGKVHLYSIQGNSLKDEGKTLPAKGAVTDLAYSPDGAFLAVTDANKVVTVFSVADGYSEHNSYYGHHAKALSVAWSPDNEHFASSGMDMMVYVWTLSDPDTRIKMPDAHRLHHVSSLAWLDENTLATVSHDACVKQWTVTFK</sequence>
<name>WDR1B_XENLA</name>
<proteinExistence type="evidence at transcript level"/>
<keyword id="KW-0009">Actin-binding</keyword>
<keyword id="KW-1003">Cell membrane</keyword>
<keyword id="KW-0963">Cytoplasm</keyword>
<keyword id="KW-0206">Cytoskeleton</keyword>
<keyword id="KW-0472">Membrane</keyword>
<keyword id="KW-0539">Nucleus</keyword>
<keyword id="KW-1185">Reference proteome</keyword>
<keyword id="KW-0677">Repeat</keyword>
<keyword id="KW-0853">WD repeat</keyword>